<dbReference type="EC" id="2.1.2.1" evidence="1"/>
<dbReference type="EMBL" id="AE001273">
    <property type="protein sequence ID" value="AAC68029.1"/>
    <property type="molecule type" value="Genomic_DNA"/>
</dbReference>
<dbReference type="PIR" id="H71516">
    <property type="entry name" value="H71516"/>
</dbReference>
<dbReference type="RefSeq" id="NP_219944.1">
    <property type="nucleotide sequence ID" value="NC_000117.1"/>
</dbReference>
<dbReference type="RefSeq" id="WP_009871786.1">
    <property type="nucleotide sequence ID" value="NC_000117.1"/>
</dbReference>
<dbReference type="SMR" id="O84439"/>
<dbReference type="FunCoup" id="O84439">
    <property type="interactions" value="237"/>
</dbReference>
<dbReference type="STRING" id="272561.CT_432"/>
<dbReference type="EnsemblBacteria" id="AAC68029">
    <property type="protein sequence ID" value="AAC68029"/>
    <property type="gene ID" value="CT_432"/>
</dbReference>
<dbReference type="GeneID" id="884207"/>
<dbReference type="KEGG" id="ctr:CT_432"/>
<dbReference type="PATRIC" id="fig|272561.5.peg.467"/>
<dbReference type="HOGENOM" id="CLU_022477_2_1_0"/>
<dbReference type="InParanoid" id="O84439"/>
<dbReference type="OrthoDB" id="9803846at2"/>
<dbReference type="UniPathway" id="UPA00193"/>
<dbReference type="UniPathway" id="UPA00288">
    <property type="reaction ID" value="UER01023"/>
</dbReference>
<dbReference type="Proteomes" id="UP000000431">
    <property type="component" value="Chromosome"/>
</dbReference>
<dbReference type="GO" id="GO:0005737">
    <property type="term" value="C:cytoplasm"/>
    <property type="evidence" value="ECO:0000318"/>
    <property type="project" value="GO_Central"/>
</dbReference>
<dbReference type="GO" id="GO:0005829">
    <property type="term" value="C:cytosol"/>
    <property type="evidence" value="ECO:0000318"/>
    <property type="project" value="GO_Central"/>
</dbReference>
<dbReference type="GO" id="GO:0004372">
    <property type="term" value="F:glycine hydroxymethyltransferase activity"/>
    <property type="evidence" value="ECO:0000318"/>
    <property type="project" value="GO_Central"/>
</dbReference>
<dbReference type="GO" id="GO:0030170">
    <property type="term" value="F:pyridoxal phosphate binding"/>
    <property type="evidence" value="ECO:0000318"/>
    <property type="project" value="GO_Central"/>
</dbReference>
<dbReference type="GO" id="GO:0019264">
    <property type="term" value="P:glycine biosynthetic process from serine"/>
    <property type="evidence" value="ECO:0000318"/>
    <property type="project" value="GO_Central"/>
</dbReference>
<dbReference type="GO" id="GO:0035999">
    <property type="term" value="P:tetrahydrofolate interconversion"/>
    <property type="evidence" value="ECO:0007669"/>
    <property type="project" value="UniProtKB-UniRule"/>
</dbReference>
<dbReference type="GO" id="GO:0046653">
    <property type="term" value="P:tetrahydrofolate metabolic process"/>
    <property type="evidence" value="ECO:0000318"/>
    <property type="project" value="GO_Central"/>
</dbReference>
<dbReference type="CDD" id="cd00378">
    <property type="entry name" value="SHMT"/>
    <property type="match status" value="1"/>
</dbReference>
<dbReference type="FunFam" id="3.40.640.10:FF:000060">
    <property type="entry name" value="Serine hydroxymethyltransferase"/>
    <property type="match status" value="1"/>
</dbReference>
<dbReference type="Gene3D" id="3.90.1150.10">
    <property type="entry name" value="Aspartate Aminotransferase, domain 1"/>
    <property type="match status" value="2"/>
</dbReference>
<dbReference type="Gene3D" id="3.40.640.10">
    <property type="entry name" value="Type I PLP-dependent aspartate aminotransferase-like (Major domain)"/>
    <property type="match status" value="2"/>
</dbReference>
<dbReference type="HAMAP" id="MF_00051">
    <property type="entry name" value="SHMT"/>
    <property type="match status" value="1"/>
</dbReference>
<dbReference type="InterPro" id="IPR015424">
    <property type="entry name" value="PyrdxlP-dep_Trfase"/>
</dbReference>
<dbReference type="InterPro" id="IPR015421">
    <property type="entry name" value="PyrdxlP-dep_Trfase_major"/>
</dbReference>
<dbReference type="InterPro" id="IPR015422">
    <property type="entry name" value="PyrdxlP-dep_Trfase_small"/>
</dbReference>
<dbReference type="InterPro" id="IPR001085">
    <property type="entry name" value="Ser_HO-MeTrfase"/>
</dbReference>
<dbReference type="InterPro" id="IPR049943">
    <property type="entry name" value="Ser_HO-MeTrfase-like"/>
</dbReference>
<dbReference type="InterPro" id="IPR019798">
    <property type="entry name" value="Ser_HO-MeTrfase_PLP_BS"/>
</dbReference>
<dbReference type="InterPro" id="IPR039429">
    <property type="entry name" value="SHMT-like_dom"/>
</dbReference>
<dbReference type="NCBIfam" id="NF000586">
    <property type="entry name" value="PRK00011.1"/>
    <property type="match status" value="1"/>
</dbReference>
<dbReference type="NCBIfam" id="NF010094">
    <property type="entry name" value="PRK13580.1"/>
    <property type="match status" value="1"/>
</dbReference>
<dbReference type="PANTHER" id="PTHR11680">
    <property type="entry name" value="SERINE HYDROXYMETHYLTRANSFERASE"/>
    <property type="match status" value="1"/>
</dbReference>
<dbReference type="PANTHER" id="PTHR11680:SF35">
    <property type="entry name" value="SERINE HYDROXYMETHYLTRANSFERASE 1"/>
    <property type="match status" value="1"/>
</dbReference>
<dbReference type="Pfam" id="PF00464">
    <property type="entry name" value="SHMT"/>
    <property type="match status" value="2"/>
</dbReference>
<dbReference type="PIRSF" id="PIRSF000412">
    <property type="entry name" value="SHMT"/>
    <property type="match status" value="1"/>
</dbReference>
<dbReference type="SUPFAM" id="SSF53383">
    <property type="entry name" value="PLP-dependent transferases"/>
    <property type="match status" value="1"/>
</dbReference>
<dbReference type="PROSITE" id="PS00096">
    <property type="entry name" value="SHMT"/>
    <property type="match status" value="1"/>
</dbReference>
<keyword id="KW-0028">Amino-acid biosynthesis</keyword>
<keyword id="KW-0963">Cytoplasm</keyword>
<keyword id="KW-0554">One-carbon metabolism</keyword>
<keyword id="KW-0663">Pyridoxal phosphate</keyword>
<keyword id="KW-1185">Reference proteome</keyword>
<keyword id="KW-0808">Transferase</keyword>
<evidence type="ECO:0000255" key="1">
    <source>
        <dbReference type="HAMAP-Rule" id="MF_00051"/>
    </source>
</evidence>
<name>GLYA_CHLTR</name>
<organism>
    <name type="scientific">Chlamydia trachomatis serovar D (strain ATCC VR-885 / DSM 19411 / UW-3/Cx)</name>
    <dbReference type="NCBI Taxonomy" id="272561"/>
    <lineage>
        <taxon>Bacteria</taxon>
        <taxon>Pseudomonadati</taxon>
        <taxon>Chlamydiota</taxon>
        <taxon>Chlamydiia</taxon>
        <taxon>Chlamydiales</taxon>
        <taxon>Chlamydiaceae</taxon>
        <taxon>Chlamydia/Chlamydophila group</taxon>
        <taxon>Chlamydia</taxon>
    </lineage>
</organism>
<comment type="function">
    <text evidence="1">Catalyzes the reversible interconversion of serine and glycine with tetrahydrofolate (THF) serving as the one-carbon carrier. This reaction serves as the major source of one-carbon groups required for the biosynthesis of purines, thymidylate, methionine, and other important biomolecules. Also exhibits THF-independent aldolase activity toward beta-hydroxyamino acids, producing glycine and aldehydes, via a retro-aldol mechanism.</text>
</comment>
<comment type="catalytic activity">
    <reaction evidence="1">
        <text>(6R)-5,10-methylene-5,6,7,8-tetrahydrofolate + glycine + H2O = (6S)-5,6,7,8-tetrahydrofolate + L-serine</text>
        <dbReference type="Rhea" id="RHEA:15481"/>
        <dbReference type="ChEBI" id="CHEBI:15377"/>
        <dbReference type="ChEBI" id="CHEBI:15636"/>
        <dbReference type="ChEBI" id="CHEBI:33384"/>
        <dbReference type="ChEBI" id="CHEBI:57305"/>
        <dbReference type="ChEBI" id="CHEBI:57453"/>
        <dbReference type="EC" id="2.1.2.1"/>
    </reaction>
</comment>
<comment type="cofactor">
    <cofactor evidence="1">
        <name>pyridoxal 5'-phosphate</name>
        <dbReference type="ChEBI" id="CHEBI:597326"/>
    </cofactor>
</comment>
<comment type="pathway">
    <text evidence="1">One-carbon metabolism; tetrahydrofolate interconversion.</text>
</comment>
<comment type="pathway">
    <text evidence="1">Amino-acid biosynthesis; glycine biosynthesis; glycine from L-serine: step 1/1.</text>
</comment>
<comment type="subunit">
    <text evidence="1">Homodimer.</text>
</comment>
<comment type="subcellular location">
    <subcellularLocation>
        <location evidence="1">Cytoplasm</location>
    </subcellularLocation>
</comment>
<comment type="similarity">
    <text evidence="1">Belongs to the SHMT family.</text>
</comment>
<proteinExistence type="inferred from homology"/>
<accession>O84439</accession>
<feature type="chain" id="PRO_0000113561" description="Serine hydroxymethyltransferase">
    <location>
        <begin position="1"/>
        <end position="497"/>
    </location>
</feature>
<feature type="binding site" evidence="1">
    <location>
        <position position="176"/>
    </location>
    <ligand>
        <name>(6S)-5,6,7,8-tetrahydrofolate</name>
        <dbReference type="ChEBI" id="CHEBI:57453"/>
    </ligand>
</feature>
<feature type="binding site" evidence="1">
    <location>
        <begin position="180"/>
        <end position="182"/>
    </location>
    <ligand>
        <name>(6S)-5,6,7,8-tetrahydrofolate</name>
        <dbReference type="ChEBI" id="CHEBI:57453"/>
    </ligand>
</feature>
<feature type="site" description="Plays an important role in substrate specificity" evidence="1">
    <location>
        <position position="288"/>
    </location>
</feature>
<feature type="modified residue" description="N6-(pyridoxal phosphate)lysine" evidence="1">
    <location>
        <position position="289"/>
    </location>
</feature>
<gene>
    <name evidence="1" type="primary">glyA</name>
    <name type="ordered locus">CT_432</name>
</gene>
<sequence length="497" mass="54271">MASLLDRYLRNISDKSQQNLASVAYLASLDHLLHAFPSIGQSIVQELKSQRSRLKMIASENFSSLSVQLAMGNLLTDKYCEGSPFKRFYSCCENVDAIEWECAETAKELFGAESAFVQPHSGADANLLAIMSIITQKIQSPAVQRLGYKTINDLPEQEYEALKAEMAQHKCLGPSLNSGGHLTHGTVRMNIMSKLMHCLPYEVNLDTELFDYDEIAKIAKEHKPTVLIAGYSSYSRRLNFATLKQIAEDCGAVLWVDMAHFAGLVAGGVFVGEENPMPYADIVTTTTHKTLRGPRGGLVLAKKEYANTLNKACPLMMGGPLPHVIAAKAIALKEAMTINFRKYAHKVVENARTLAEVFQRNGLRLLTGGTDNHMLIIDLTSLGVPGRIAEDMLTSVGIAVNRNTIPSDASGQWKTSGIRLGTPALTTLGMGSAEMEEVANIIVKVLRNITVRSNAESGSSKSEGELSEGIAQEARQRVADLLGRFPLYPEIDLETLV</sequence>
<reference key="1">
    <citation type="journal article" date="1998" name="Science">
        <title>Genome sequence of an obligate intracellular pathogen of humans: Chlamydia trachomatis.</title>
        <authorList>
            <person name="Stephens R.S."/>
            <person name="Kalman S."/>
            <person name="Lammel C.J."/>
            <person name="Fan J."/>
            <person name="Marathe R."/>
            <person name="Aravind L."/>
            <person name="Mitchell W.P."/>
            <person name="Olinger L."/>
            <person name="Tatusov R.L."/>
            <person name="Zhao Q."/>
            <person name="Koonin E.V."/>
            <person name="Davis R.W."/>
        </authorList>
    </citation>
    <scope>NUCLEOTIDE SEQUENCE [LARGE SCALE GENOMIC DNA]</scope>
    <source>
        <strain>ATCC VR-885 / DSM 19411 / UW-3/Cx</strain>
    </source>
</reference>
<protein>
    <recommendedName>
        <fullName evidence="1">Serine hydroxymethyltransferase</fullName>
        <shortName evidence="1">SHMT</shortName>
        <shortName evidence="1">Serine methylase</shortName>
        <ecNumber evidence="1">2.1.2.1</ecNumber>
    </recommendedName>
</protein>